<comment type="function">
    <text evidence="2">Cell wall formation.</text>
</comment>
<comment type="catalytic activity">
    <reaction evidence="2">
        <text>2 D-alanine + ATP = D-alanyl-D-alanine + ADP + phosphate + H(+)</text>
        <dbReference type="Rhea" id="RHEA:11224"/>
        <dbReference type="ChEBI" id="CHEBI:15378"/>
        <dbReference type="ChEBI" id="CHEBI:30616"/>
        <dbReference type="ChEBI" id="CHEBI:43474"/>
        <dbReference type="ChEBI" id="CHEBI:57416"/>
        <dbReference type="ChEBI" id="CHEBI:57822"/>
        <dbReference type="ChEBI" id="CHEBI:456216"/>
        <dbReference type="EC" id="6.3.2.4"/>
    </reaction>
</comment>
<comment type="cofactor">
    <cofactor evidence="1">
        <name>Mg(2+)</name>
        <dbReference type="ChEBI" id="CHEBI:18420"/>
    </cofactor>
    <cofactor evidence="1">
        <name>Mn(2+)</name>
        <dbReference type="ChEBI" id="CHEBI:29035"/>
    </cofactor>
    <text evidence="1">Binds 2 magnesium or manganese ions per subunit.</text>
</comment>
<comment type="pathway">
    <text evidence="2">Cell wall biogenesis; peptidoglycan biosynthesis.</text>
</comment>
<comment type="subcellular location">
    <subcellularLocation>
        <location evidence="2">Cytoplasm</location>
    </subcellularLocation>
</comment>
<comment type="similarity">
    <text evidence="2">Belongs to the D-alanine--D-alanine ligase family.</text>
</comment>
<accession>Q6GEZ1</accession>
<gene>
    <name evidence="2" type="primary">ddl</name>
    <name type="ordered locus">SAR2170</name>
</gene>
<evidence type="ECO:0000250" key="1"/>
<evidence type="ECO:0000255" key="2">
    <source>
        <dbReference type="HAMAP-Rule" id="MF_00047"/>
    </source>
</evidence>
<sequence length="356" mass="40276">MTKENICIVFGGKSAEHEVSILTAQNVLNAIDKDKYHVDIIYITNDGDWRKQNNITTEIKSTDELHLENGEALEISQLLKESSSGQPYDAVFPLLHGPNGEDGTIQGLFEVLDVPYVGNGVLSAASSMDKLVMKQLFEHRGLPQLPYISFLRSEYEKYEHNILKLVNDKLNYPVFVKPANLGSSIGISKCSNEVELKEGIKEAFQFDRKLVIEQGVNAREIEVAVLGNDYPEATWPGEVVKDVAFYDYKSKYKDGKVQLQIPADLDEDVQLTLRNMALEAFKATDCSGLVRADFFVTEDNQIYINETNAMPGFTAFSMYPKLWENMGLSYPELITKLIELAKERHQDKQKNKYKID</sequence>
<organism>
    <name type="scientific">Staphylococcus aureus (strain MRSA252)</name>
    <dbReference type="NCBI Taxonomy" id="282458"/>
    <lineage>
        <taxon>Bacteria</taxon>
        <taxon>Bacillati</taxon>
        <taxon>Bacillota</taxon>
        <taxon>Bacilli</taxon>
        <taxon>Bacillales</taxon>
        <taxon>Staphylococcaceae</taxon>
        <taxon>Staphylococcus</taxon>
    </lineage>
</organism>
<name>DDL_STAAR</name>
<dbReference type="EC" id="6.3.2.4" evidence="2"/>
<dbReference type="EMBL" id="BX571856">
    <property type="protein sequence ID" value="CAG41151.1"/>
    <property type="molecule type" value="Genomic_DNA"/>
</dbReference>
<dbReference type="RefSeq" id="WP_000159639.1">
    <property type="nucleotide sequence ID" value="NC_002952.2"/>
</dbReference>
<dbReference type="SMR" id="Q6GEZ1"/>
<dbReference type="KEGG" id="sar:SAR2170"/>
<dbReference type="HOGENOM" id="CLU_039268_0_0_9"/>
<dbReference type="UniPathway" id="UPA00219"/>
<dbReference type="Proteomes" id="UP000000596">
    <property type="component" value="Chromosome"/>
</dbReference>
<dbReference type="GO" id="GO:0005829">
    <property type="term" value="C:cytosol"/>
    <property type="evidence" value="ECO:0007669"/>
    <property type="project" value="TreeGrafter"/>
</dbReference>
<dbReference type="GO" id="GO:0005524">
    <property type="term" value="F:ATP binding"/>
    <property type="evidence" value="ECO:0007669"/>
    <property type="project" value="UniProtKB-KW"/>
</dbReference>
<dbReference type="GO" id="GO:0008716">
    <property type="term" value="F:D-alanine-D-alanine ligase activity"/>
    <property type="evidence" value="ECO:0007669"/>
    <property type="project" value="UniProtKB-UniRule"/>
</dbReference>
<dbReference type="GO" id="GO:0046872">
    <property type="term" value="F:metal ion binding"/>
    <property type="evidence" value="ECO:0007669"/>
    <property type="project" value="UniProtKB-KW"/>
</dbReference>
<dbReference type="GO" id="GO:0071555">
    <property type="term" value="P:cell wall organization"/>
    <property type="evidence" value="ECO:0007669"/>
    <property type="project" value="UniProtKB-KW"/>
</dbReference>
<dbReference type="GO" id="GO:0009252">
    <property type="term" value="P:peptidoglycan biosynthetic process"/>
    <property type="evidence" value="ECO:0007669"/>
    <property type="project" value="UniProtKB-UniRule"/>
</dbReference>
<dbReference type="GO" id="GO:0008360">
    <property type="term" value="P:regulation of cell shape"/>
    <property type="evidence" value="ECO:0007669"/>
    <property type="project" value="UniProtKB-KW"/>
</dbReference>
<dbReference type="FunFam" id="3.30.1490.20:FF:000007">
    <property type="entry name" value="D-alanine--D-alanine ligase"/>
    <property type="match status" value="1"/>
</dbReference>
<dbReference type="FunFam" id="3.30.470.20:FF:000008">
    <property type="entry name" value="D-alanine--D-alanine ligase"/>
    <property type="match status" value="1"/>
</dbReference>
<dbReference type="FunFam" id="3.40.50.20:FF:000020">
    <property type="entry name" value="D-alanine--D-alanine ligase"/>
    <property type="match status" value="1"/>
</dbReference>
<dbReference type="Gene3D" id="3.40.50.20">
    <property type="match status" value="1"/>
</dbReference>
<dbReference type="Gene3D" id="3.30.1490.20">
    <property type="entry name" value="ATP-grasp fold, A domain"/>
    <property type="match status" value="1"/>
</dbReference>
<dbReference type="Gene3D" id="3.30.470.20">
    <property type="entry name" value="ATP-grasp fold, B domain"/>
    <property type="match status" value="1"/>
</dbReference>
<dbReference type="HAMAP" id="MF_00047">
    <property type="entry name" value="Dala_Dala_lig"/>
    <property type="match status" value="1"/>
</dbReference>
<dbReference type="InterPro" id="IPR011761">
    <property type="entry name" value="ATP-grasp"/>
</dbReference>
<dbReference type="InterPro" id="IPR013815">
    <property type="entry name" value="ATP_grasp_subdomain_1"/>
</dbReference>
<dbReference type="InterPro" id="IPR000291">
    <property type="entry name" value="D-Ala_lig_Van_CS"/>
</dbReference>
<dbReference type="InterPro" id="IPR005905">
    <property type="entry name" value="D_ala_D_ala"/>
</dbReference>
<dbReference type="InterPro" id="IPR011095">
    <property type="entry name" value="Dala_Dala_lig_C"/>
</dbReference>
<dbReference type="InterPro" id="IPR011127">
    <property type="entry name" value="Dala_Dala_lig_N"/>
</dbReference>
<dbReference type="InterPro" id="IPR016185">
    <property type="entry name" value="PreATP-grasp_dom_sf"/>
</dbReference>
<dbReference type="NCBIfam" id="TIGR01205">
    <property type="entry name" value="D_ala_D_alaTIGR"/>
    <property type="match status" value="1"/>
</dbReference>
<dbReference type="NCBIfam" id="NF002526">
    <property type="entry name" value="PRK01966.1-2"/>
    <property type="match status" value="1"/>
</dbReference>
<dbReference type="NCBIfam" id="NF002528">
    <property type="entry name" value="PRK01966.1-4"/>
    <property type="match status" value="1"/>
</dbReference>
<dbReference type="PANTHER" id="PTHR23132">
    <property type="entry name" value="D-ALANINE--D-ALANINE LIGASE"/>
    <property type="match status" value="1"/>
</dbReference>
<dbReference type="PANTHER" id="PTHR23132:SF25">
    <property type="entry name" value="D-ALANINE--D-ALANINE LIGASE A"/>
    <property type="match status" value="1"/>
</dbReference>
<dbReference type="Pfam" id="PF07478">
    <property type="entry name" value="Dala_Dala_lig_C"/>
    <property type="match status" value="1"/>
</dbReference>
<dbReference type="Pfam" id="PF01820">
    <property type="entry name" value="Dala_Dala_lig_N"/>
    <property type="match status" value="1"/>
</dbReference>
<dbReference type="PIRSF" id="PIRSF039102">
    <property type="entry name" value="Ddl/VanB"/>
    <property type="match status" value="1"/>
</dbReference>
<dbReference type="SUPFAM" id="SSF56059">
    <property type="entry name" value="Glutathione synthetase ATP-binding domain-like"/>
    <property type="match status" value="1"/>
</dbReference>
<dbReference type="SUPFAM" id="SSF52440">
    <property type="entry name" value="PreATP-grasp domain"/>
    <property type="match status" value="1"/>
</dbReference>
<dbReference type="PROSITE" id="PS50975">
    <property type="entry name" value="ATP_GRASP"/>
    <property type="match status" value="1"/>
</dbReference>
<dbReference type="PROSITE" id="PS00843">
    <property type="entry name" value="DALA_DALA_LIGASE_1"/>
    <property type="match status" value="1"/>
</dbReference>
<dbReference type="PROSITE" id="PS00844">
    <property type="entry name" value="DALA_DALA_LIGASE_2"/>
    <property type="match status" value="1"/>
</dbReference>
<feature type="chain" id="PRO_0000177877" description="D-alanine--D-alanine ligase">
    <location>
        <begin position="1"/>
        <end position="356"/>
    </location>
</feature>
<feature type="domain" description="ATP-grasp" evidence="2">
    <location>
        <begin position="134"/>
        <end position="339"/>
    </location>
</feature>
<feature type="binding site" evidence="2">
    <location>
        <begin position="167"/>
        <end position="222"/>
    </location>
    <ligand>
        <name>ATP</name>
        <dbReference type="ChEBI" id="CHEBI:30616"/>
    </ligand>
</feature>
<feature type="binding site" evidence="2">
    <location>
        <position position="293"/>
    </location>
    <ligand>
        <name>Mg(2+)</name>
        <dbReference type="ChEBI" id="CHEBI:18420"/>
        <label>1</label>
    </ligand>
</feature>
<feature type="binding site" evidence="2">
    <location>
        <position position="306"/>
    </location>
    <ligand>
        <name>Mg(2+)</name>
        <dbReference type="ChEBI" id="CHEBI:18420"/>
        <label>1</label>
    </ligand>
</feature>
<feature type="binding site" evidence="2">
    <location>
        <position position="306"/>
    </location>
    <ligand>
        <name>Mg(2+)</name>
        <dbReference type="ChEBI" id="CHEBI:18420"/>
        <label>2</label>
    </ligand>
</feature>
<feature type="binding site" evidence="2">
    <location>
        <position position="308"/>
    </location>
    <ligand>
        <name>Mg(2+)</name>
        <dbReference type="ChEBI" id="CHEBI:18420"/>
        <label>2</label>
    </ligand>
</feature>
<keyword id="KW-0067">ATP-binding</keyword>
<keyword id="KW-0133">Cell shape</keyword>
<keyword id="KW-0961">Cell wall biogenesis/degradation</keyword>
<keyword id="KW-0963">Cytoplasm</keyword>
<keyword id="KW-0436">Ligase</keyword>
<keyword id="KW-0460">Magnesium</keyword>
<keyword id="KW-0464">Manganese</keyword>
<keyword id="KW-0479">Metal-binding</keyword>
<keyword id="KW-0547">Nucleotide-binding</keyword>
<keyword id="KW-0573">Peptidoglycan synthesis</keyword>
<proteinExistence type="inferred from homology"/>
<protein>
    <recommendedName>
        <fullName evidence="2">D-alanine--D-alanine ligase</fullName>
        <ecNumber evidence="2">6.3.2.4</ecNumber>
    </recommendedName>
    <alternativeName>
        <fullName evidence="2">D-Ala-D-Ala ligase</fullName>
    </alternativeName>
    <alternativeName>
        <fullName evidence="2">D-alanylalanine synthetase</fullName>
    </alternativeName>
</protein>
<reference key="1">
    <citation type="journal article" date="2004" name="Proc. Natl. Acad. Sci. U.S.A.">
        <title>Complete genomes of two clinical Staphylococcus aureus strains: evidence for the rapid evolution of virulence and drug resistance.</title>
        <authorList>
            <person name="Holden M.T.G."/>
            <person name="Feil E.J."/>
            <person name="Lindsay J.A."/>
            <person name="Peacock S.J."/>
            <person name="Day N.P.J."/>
            <person name="Enright M.C."/>
            <person name="Foster T.J."/>
            <person name="Moore C.E."/>
            <person name="Hurst L."/>
            <person name="Atkin R."/>
            <person name="Barron A."/>
            <person name="Bason N."/>
            <person name="Bentley S.D."/>
            <person name="Chillingworth C."/>
            <person name="Chillingworth T."/>
            <person name="Churcher C."/>
            <person name="Clark L."/>
            <person name="Corton C."/>
            <person name="Cronin A."/>
            <person name="Doggett J."/>
            <person name="Dowd L."/>
            <person name="Feltwell T."/>
            <person name="Hance Z."/>
            <person name="Harris B."/>
            <person name="Hauser H."/>
            <person name="Holroyd S."/>
            <person name="Jagels K."/>
            <person name="James K.D."/>
            <person name="Lennard N."/>
            <person name="Line A."/>
            <person name="Mayes R."/>
            <person name="Moule S."/>
            <person name="Mungall K."/>
            <person name="Ormond D."/>
            <person name="Quail M.A."/>
            <person name="Rabbinowitsch E."/>
            <person name="Rutherford K.M."/>
            <person name="Sanders M."/>
            <person name="Sharp S."/>
            <person name="Simmonds M."/>
            <person name="Stevens K."/>
            <person name="Whitehead S."/>
            <person name="Barrell B.G."/>
            <person name="Spratt B.G."/>
            <person name="Parkhill J."/>
        </authorList>
    </citation>
    <scope>NUCLEOTIDE SEQUENCE [LARGE SCALE GENOMIC DNA]</scope>
    <source>
        <strain>MRSA252</strain>
    </source>
</reference>